<accession>Q8TR92</accession>
<keyword id="KW-0963">Cytoplasm</keyword>
<keyword id="KW-0489">Methyltransferase</keyword>
<keyword id="KW-1185">Reference proteome</keyword>
<keyword id="KW-0698">rRNA processing</keyword>
<keyword id="KW-0949">S-adenosyl-L-methionine</keyword>
<keyword id="KW-0808">Transferase</keyword>
<organism>
    <name type="scientific">Methanosarcina acetivorans (strain ATCC 35395 / DSM 2834 / JCM 12185 / C2A)</name>
    <dbReference type="NCBI Taxonomy" id="188937"/>
    <lineage>
        <taxon>Archaea</taxon>
        <taxon>Methanobacteriati</taxon>
        <taxon>Methanobacteriota</taxon>
        <taxon>Stenosarchaea group</taxon>
        <taxon>Methanomicrobia</taxon>
        <taxon>Methanosarcinales</taxon>
        <taxon>Methanosarcinaceae</taxon>
        <taxon>Methanosarcina</taxon>
    </lineage>
</organism>
<dbReference type="EC" id="2.1.1.166" evidence="1"/>
<dbReference type="EMBL" id="AE010299">
    <property type="protein sequence ID" value="AAM04707.1"/>
    <property type="molecule type" value="Genomic_DNA"/>
</dbReference>
<dbReference type="RefSeq" id="WP_011021309.1">
    <property type="nucleotide sequence ID" value="NC_003552.1"/>
</dbReference>
<dbReference type="SMR" id="Q8TR92"/>
<dbReference type="FunCoup" id="Q8TR92">
    <property type="interactions" value="178"/>
</dbReference>
<dbReference type="STRING" id="188937.MA_1288"/>
<dbReference type="EnsemblBacteria" id="AAM04707">
    <property type="protein sequence ID" value="AAM04707"/>
    <property type="gene ID" value="MA_1288"/>
</dbReference>
<dbReference type="GeneID" id="1473176"/>
<dbReference type="KEGG" id="mac:MA_1288"/>
<dbReference type="HOGENOM" id="CLU_009422_4_4_2"/>
<dbReference type="InParanoid" id="Q8TR92"/>
<dbReference type="OrthoDB" id="26307at2157"/>
<dbReference type="PhylomeDB" id="Q8TR92"/>
<dbReference type="Proteomes" id="UP000002487">
    <property type="component" value="Chromosome"/>
</dbReference>
<dbReference type="GO" id="GO:0005737">
    <property type="term" value="C:cytoplasm"/>
    <property type="evidence" value="ECO:0007669"/>
    <property type="project" value="UniProtKB-SubCell"/>
</dbReference>
<dbReference type="GO" id="GO:0008173">
    <property type="term" value="F:RNA methyltransferase activity"/>
    <property type="evidence" value="ECO:0000318"/>
    <property type="project" value="GO_Central"/>
</dbReference>
<dbReference type="GO" id="GO:0008650">
    <property type="term" value="F:rRNA (uridine-2'-O-)-methyltransferase activity"/>
    <property type="evidence" value="ECO:0007669"/>
    <property type="project" value="UniProtKB-UniRule"/>
</dbReference>
<dbReference type="GO" id="GO:0001510">
    <property type="term" value="P:RNA methylation"/>
    <property type="evidence" value="ECO:0000318"/>
    <property type="project" value="GO_Central"/>
</dbReference>
<dbReference type="Gene3D" id="2.40.50.140">
    <property type="entry name" value="Nucleic acid-binding proteins"/>
    <property type="match status" value="1"/>
</dbReference>
<dbReference type="Gene3D" id="3.40.50.150">
    <property type="entry name" value="Vaccinia Virus protein VP39"/>
    <property type="match status" value="1"/>
</dbReference>
<dbReference type="HAMAP" id="MF_01547">
    <property type="entry name" value="RNA_methyltr_E"/>
    <property type="match status" value="1"/>
</dbReference>
<dbReference type="InterPro" id="IPR012340">
    <property type="entry name" value="NA-bd_OB-fold"/>
</dbReference>
<dbReference type="InterPro" id="IPR050082">
    <property type="entry name" value="RNA_methyltr_RlmE"/>
</dbReference>
<dbReference type="InterPro" id="IPR002877">
    <property type="entry name" value="RNA_MeTrfase_FtsJ_dom"/>
</dbReference>
<dbReference type="InterPro" id="IPR015507">
    <property type="entry name" value="rRNA-MeTfrase_E"/>
</dbReference>
<dbReference type="InterPro" id="IPR029063">
    <property type="entry name" value="SAM-dependent_MTases_sf"/>
</dbReference>
<dbReference type="InterPro" id="IPR002792">
    <property type="entry name" value="TRAM_dom"/>
</dbReference>
<dbReference type="PANTHER" id="PTHR10920:SF13">
    <property type="entry name" value="PRE-RRNA 2'-O-RIBOSE RNA METHYLTRANSFERASE FTSJ3"/>
    <property type="match status" value="1"/>
</dbReference>
<dbReference type="PANTHER" id="PTHR10920">
    <property type="entry name" value="RIBOSOMAL RNA METHYLTRANSFERASE"/>
    <property type="match status" value="1"/>
</dbReference>
<dbReference type="Pfam" id="PF01728">
    <property type="entry name" value="FtsJ"/>
    <property type="match status" value="1"/>
</dbReference>
<dbReference type="Pfam" id="PF01938">
    <property type="entry name" value="TRAM"/>
    <property type="match status" value="1"/>
</dbReference>
<dbReference type="SUPFAM" id="SSF50249">
    <property type="entry name" value="Nucleic acid-binding proteins"/>
    <property type="match status" value="1"/>
</dbReference>
<dbReference type="SUPFAM" id="SSF53335">
    <property type="entry name" value="S-adenosyl-L-methionine-dependent methyltransferases"/>
    <property type="match status" value="1"/>
</dbReference>
<dbReference type="PROSITE" id="PS50926">
    <property type="entry name" value="TRAM"/>
    <property type="match status" value="1"/>
</dbReference>
<gene>
    <name evidence="1" type="primary">rlmE</name>
    <name evidence="1" type="synonym">rrmJ</name>
    <name type="ordered locus">MA_1288</name>
</gene>
<sequence length="272" mass="30032">MARDRRDYYYHQAKEEGYRSRASFKLKQINEKHNVIKRGDSVVDLGAAPGGWLQVAKQLSGGKVLGVDLQRIAPIEGVETIQGDINADSTIKKIIRAVGEKGADVVLCDAAPNLSGNWSYDHARSIELTTSALECAKKILKPKGNFVVKVFQGDMFNDYLEKVRDNFVHVKAYSPQASRSQSAEIYVIGKKFLTAPLRRGDKFVVDIEKLGSGGDGAVLIEGFVVFVKEVEVGEKVRIKIADVKPNFAFADVEERLEKAEDSENLGNSEKAE</sequence>
<feature type="chain" id="PRO_0000155569" description="Ribosomal RNA large subunit methyltransferase E">
    <location>
        <begin position="1"/>
        <end position="272"/>
    </location>
</feature>
<feature type="domain" description="TRAM" evidence="1">
    <location>
        <begin position="196"/>
        <end position="254"/>
    </location>
</feature>
<feature type="active site" description="Proton acceptor" evidence="1">
    <location>
        <position position="149"/>
    </location>
</feature>
<feature type="binding site" evidence="1">
    <location>
        <position position="50"/>
    </location>
    <ligand>
        <name>S-adenosyl-L-methionine</name>
        <dbReference type="ChEBI" id="CHEBI:59789"/>
    </ligand>
</feature>
<feature type="binding site" evidence="1">
    <location>
        <position position="52"/>
    </location>
    <ligand>
        <name>S-adenosyl-L-methionine</name>
        <dbReference type="ChEBI" id="CHEBI:59789"/>
    </ligand>
</feature>
<feature type="binding site" evidence="1">
    <location>
        <position position="68"/>
    </location>
    <ligand>
        <name>S-adenosyl-L-methionine</name>
        <dbReference type="ChEBI" id="CHEBI:59789"/>
    </ligand>
</feature>
<feature type="binding site" evidence="1">
    <location>
        <position position="84"/>
    </location>
    <ligand>
        <name>S-adenosyl-L-methionine</name>
        <dbReference type="ChEBI" id="CHEBI:59789"/>
    </ligand>
</feature>
<feature type="binding site" evidence="1">
    <location>
        <position position="109"/>
    </location>
    <ligand>
        <name>S-adenosyl-L-methionine</name>
        <dbReference type="ChEBI" id="CHEBI:59789"/>
    </ligand>
</feature>
<evidence type="ECO:0000255" key="1">
    <source>
        <dbReference type="HAMAP-Rule" id="MF_01547"/>
    </source>
</evidence>
<proteinExistence type="inferred from homology"/>
<reference key="1">
    <citation type="journal article" date="2002" name="Genome Res.">
        <title>The genome of Methanosarcina acetivorans reveals extensive metabolic and physiological diversity.</title>
        <authorList>
            <person name="Galagan J.E."/>
            <person name="Nusbaum C."/>
            <person name="Roy A."/>
            <person name="Endrizzi M.G."/>
            <person name="Macdonald P."/>
            <person name="FitzHugh W."/>
            <person name="Calvo S."/>
            <person name="Engels R."/>
            <person name="Smirnov S."/>
            <person name="Atnoor D."/>
            <person name="Brown A."/>
            <person name="Allen N."/>
            <person name="Naylor J."/>
            <person name="Stange-Thomann N."/>
            <person name="DeArellano K."/>
            <person name="Johnson R."/>
            <person name="Linton L."/>
            <person name="McEwan P."/>
            <person name="McKernan K."/>
            <person name="Talamas J."/>
            <person name="Tirrell A."/>
            <person name="Ye W."/>
            <person name="Zimmer A."/>
            <person name="Barber R.D."/>
            <person name="Cann I."/>
            <person name="Graham D.E."/>
            <person name="Grahame D.A."/>
            <person name="Guss A.M."/>
            <person name="Hedderich R."/>
            <person name="Ingram-Smith C."/>
            <person name="Kuettner H.C."/>
            <person name="Krzycki J.A."/>
            <person name="Leigh J.A."/>
            <person name="Li W."/>
            <person name="Liu J."/>
            <person name="Mukhopadhyay B."/>
            <person name="Reeve J.N."/>
            <person name="Smith K."/>
            <person name="Springer T.A."/>
            <person name="Umayam L.A."/>
            <person name="White O."/>
            <person name="White R.H."/>
            <person name="de Macario E.C."/>
            <person name="Ferry J.G."/>
            <person name="Jarrell K.F."/>
            <person name="Jing H."/>
            <person name="Macario A.J.L."/>
            <person name="Paulsen I.T."/>
            <person name="Pritchett M."/>
            <person name="Sowers K.R."/>
            <person name="Swanson R.V."/>
            <person name="Zinder S.H."/>
            <person name="Lander E."/>
            <person name="Metcalf W.W."/>
            <person name="Birren B."/>
        </authorList>
    </citation>
    <scope>NUCLEOTIDE SEQUENCE [LARGE SCALE GENOMIC DNA]</scope>
    <source>
        <strain>ATCC 35395 / DSM 2834 / JCM 12185 / C2A</strain>
    </source>
</reference>
<protein>
    <recommendedName>
        <fullName evidence="1">Ribosomal RNA large subunit methyltransferase E</fullName>
        <ecNumber evidence="1">2.1.1.166</ecNumber>
    </recommendedName>
    <alternativeName>
        <fullName evidence="1">23S rRNA Um2552 methyltransferase</fullName>
    </alternativeName>
    <alternativeName>
        <fullName evidence="1">rRNA (uridine-2'-O-)-methyltransferase</fullName>
    </alternativeName>
</protein>
<comment type="function">
    <text evidence="1">Specifically methylates the uridine in position 2552 of 23S rRNA at the 2'-O position of the ribose in the fully assembled 50S ribosomal subunit.</text>
</comment>
<comment type="catalytic activity">
    <reaction evidence="1">
        <text>uridine(2552) in 23S rRNA + S-adenosyl-L-methionine = 2'-O-methyluridine(2552) in 23S rRNA + S-adenosyl-L-homocysteine + H(+)</text>
        <dbReference type="Rhea" id="RHEA:42720"/>
        <dbReference type="Rhea" id="RHEA-COMP:10202"/>
        <dbReference type="Rhea" id="RHEA-COMP:10203"/>
        <dbReference type="ChEBI" id="CHEBI:15378"/>
        <dbReference type="ChEBI" id="CHEBI:57856"/>
        <dbReference type="ChEBI" id="CHEBI:59789"/>
        <dbReference type="ChEBI" id="CHEBI:65315"/>
        <dbReference type="ChEBI" id="CHEBI:74478"/>
        <dbReference type="EC" id="2.1.1.166"/>
    </reaction>
</comment>
<comment type="subcellular location">
    <subcellularLocation>
        <location evidence="1">Cytoplasm</location>
    </subcellularLocation>
</comment>
<comment type="similarity">
    <text evidence="1">Belongs to the class I-like SAM-binding methyltransferase superfamily. RNA methyltransferase RlmE family.</text>
</comment>
<name>RLME_METAC</name>